<reference key="1">
    <citation type="submission" date="2006-12" db="EMBL/GenBank/DDBJ databases">
        <title>Complete sequence of chromosome 2 of Paracoccus denitrificans PD1222.</title>
        <authorList>
            <person name="Copeland A."/>
            <person name="Lucas S."/>
            <person name="Lapidus A."/>
            <person name="Barry K."/>
            <person name="Detter J.C."/>
            <person name="Glavina del Rio T."/>
            <person name="Hammon N."/>
            <person name="Israni S."/>
            <person name="Dalin E."/>
            <person name="Tice H."/>
            <person name="Pitluck S."/>
            <person name="Munk A.C."/>
            <person name="Brettin T."/>
            <person name="Bruce D."/>
            <person name="Han C."/>
            <person name="Tapia R."/>
            <person name="Gilna P."/>
            <person name="Schmutz J."/>
            <person name="Larimer F."/>
            <person name="Land M."/>
            <person name="Hauser L."/>
            <person name="Kyrpides N."/>
            <person name="Lykidis A."/>
            <person name="Spiro S."/>
            <person name="Richardson D.J."/>
            <person name="Moir J.W.B."/>
            <person name="Ferguson S.J."/>
            <person name="van Spanning R.J.M."/>
            <person name="Richardson P."/>
        </authorList>
    </citation>
    <scope>NUCLEOTIDE SEQUENCE [LARGE SCALE GENOMIC DNA]</scope>
    <source>
        <strain>Pd 1222</strain>
    </source>
</reference>
<organism>
    <name type="scientific">Paracoccus denitrificans (strain Pd 1222)</name>
    <dbReference type="NCBI Taxonomy" id="318586"/>
    <lineage>
        <taxon>Bacteria</taxon>
        <taxon>Pseudomonadati</taxon>
        <taxon>Pseudomonadota</taxon>
        <taxon>Alphaproteobacteria</taxon>
        <taxon>Rhodobacterales</taxon>
        <taxon>Paracoccaceae</taxon>
        <taxon>Paracoccus</taxon>
    </lineage>
</organism>
<dbReference type="EMBL" id="CP000490">
    <property type="protein sequence ID" value="ABL70960.1"/>
    <property type="molecule type" value="Genomic_DNA"/>
</dbReference>
<dbReference type="RefSeq" id="WP_011749151.1">
    <property type="nucleotide sequence ID" value="NC_008687.1"/>
</dbReference>
<dbReference type="SMR" id="A1B616"/>
<dbReference type="STRING" id="318586.Pden_2876"/>
<dbReference type="TCDB" id="3.A.2.1.7">
    <property type="family name" value="the h+- or na+-translocating f-type, v-type and a-type atpase (f-atpase) superfamily"/>
</dbReference>
<dbReference type="EnsemblBacteria" id="ABL70960">
    <property type="protein sequence ID" value="ABL70960"/>
    <property type="gene ID" value="Pden_2876"/>
</dbReference>
<dbReference type="GeneID" id="93452556"/>
<dbReference type="KEGG" id="pde:Pden_2876"/>
<dbReference type="eggNOG" id="COG0711">
    <property type="taxonomic scope" value="Bacteria"/>
</dbReference>
<dbReference type="HOGENOM" id="CLU_079215_6_2_5"/>
<dbReference type="OrthoDB" id="8479836at2"/>
<dbReference type="Proteomes" id="UP000000361">
    <property type="component" value="Chromosome 2"/>
</dbReference>
<dbReference type="GO" id="GO:0005886">
    <property type="term" value="C:plasma membrane"/>
    <property type="evidence" value="ECO:0007669"/>
    <property type="project" value="UniProtKB-SubCell"/>
</dbReference>
<dbReference type="GO" id="GO:0045259">
    <property type="term" value="C:proton-transporting ATP synthase complex"/>
    <property type="evidence" value="ECO:0007669"/>
    <property type="project" value="UniProtKB-KW"/>
</dbReference>
<dbReference type="GO" id="GO:0046933">
    <property type="term" value="F:proton-transporting ATP synthase activity, rotational mechanism"/>
    <property type="evidence" value="ECO:0007669"/>
    <property type="project" value="UniProtKB-UniRule"/>
</dbReference>
<dbReference type="GO" id="GO:0046961">
    <property type="term" value="F:proton-transporting ATPase activity, rotational mechanism"/>
    <property type="evidence" value="ECO:0007669"/>
    <property type="project" value="TreeGrafter"/>
</dbReference>
<dbReference type="CDD" id="cd06503">
    <property type="entry name" value="ATP-synt_Fo_b"/>
    <property type="match status" value="1"/>
</dbReference>
<dbReference type="HAMAP" id="MF_01398">
    <property type="entry name" value="ATP_synth_b_bprime"/>
    <property type="match status" value="1"/>
</dbReference>
<dbReference type="InterPro" id="IPR002146">
    <property type="entry name" value="ATP_synth_b/b'su_bac/chlpt"/>
</dbReference>
<dbReference type="InterPro" id="IPR050059">
    <property type="entry name" value="ATP_synthase_B_chain"/>
</dbReference>
<dbReference type="NCBIfam" id="NF009989">
    <property type="entry name" value="PRK13455.1"/>
    <property type="match status" value="1"/>
</dbReference>
<dbReference type="PANTHER" id="PTHR33445:SF1">
    <property type="entry name" value="ATP SYNTHASE SUBUNIT B"/>
    <property type="match status" value="1"/>
</dbReference>
<dbReference type="PANTHER" id="PTHR33445">
    <property type="entry name" value="ATP SYNTHASE SUBUNIT B', CHLOROPLASTIC"/>
    <property type="match status" value="1"/>
</dbReference>
<dbReference type="Pfam" id="PF00430">
    <property type="entry name" value="ATP-synt_B"/>
    <property type="match status" value="1"/>
</dbReference>
<name>ATPF_PARDP</name>
<sequence length="184" mass="20161">MKRLSVLFALVASPALAASGPFFSLRNTDFIVTLAFLLFVGILVYFRVPQIVGGLLDKRAEGIRNDLAEARRLREEAQEIYASYERRQREVKSQADDIVANAKREAVAEAEKAKKALQLSIERRLKAAEEQIAGAEAEAVRAVRDRAIQTAIAAATEILGKQASPAERSAGIDKAIDEVAQRLN</sequence>
<gene>
    <name evidence="1" type="primary">atpF</name>
    <name type="ordered locus">Pden_2876</name>
</gene>
<feature type="chain" id="PRO_5000182820" description="ATP synthase subunit b">
    <location>
        <begin position="1"/>
        <end position="184"/>
    </location>
</feature>
<feature type="transmembrane region" description="Helical" evidence="1">
    <location>
        <begin position="4"/>
        <end position="24"/>
    </location>
</feature>
<keyword id="KW-0066">ATP synthesis</keyword>
<keyword id="KW-0997">Cell inner membrane</keyword>
<keyword id="KW-1003">Cell membrane</keyword>
<keyword id="KW-0138">CF(0)</keyword>
<keyword id="KW-0375">Hydrogen ion transport</keyword>
<keyword id="KW-0406">Ion transport</keyword>
<keyword id="KW-0472">Membrane</keyword>
<keyword id="KW-1185">Reference proteome</keyword>
<keyword id="KW-0812">Transmembrane</keyword>
<keyword id="KW-1133">Transmembrane helix</keyword>
<keyword id="KW-0813">Transport</keyword>
<proteinExistence type="inferred from homology"/>
<protein>
    <recommendedName>
        <fullName evidence="1">ATP synthase subunit b</fullName>
    </recommendedName>
    <alternativeName>
        <fullName evidence="1">ATP synthase F(0) sector subunit b</fullName>
    </alternativeName>
    <alternativeName>
        <fullName evidence="1">ATPase subunit I</fullName>
    </alternativeName>
    <alternativeName>
        <fullName evidence="1">F-type ATPase subunit b</fullName>
        <shortName evidence="1">F-ATPase subunit b</shortName>
    </alternativeName>
</protein>
<accession>A1B616</accession>
<evidence type="ECO:0000255" key="1">
    <source>
        <dbReference type="HAMAP-Rule" id="MF_01398"/>
    </source>
</evidence>
<comment type="function">
    <text evidence="1">F(1)F(0) ATP synthase produces ATP from ADP in the presence of a proton or sodium gradient. F-type ATPases consist of two structural domains, F(1) containing the extramembraneous catalytic core and F(0) containing the membrane proton channel, linked together by a central stalk and a peripheral stalk. During catalysis, ATP synthesis in the catalytic domain of F(1) is coupled via a rotary mechanism of the central stalk subunits to proton translocation.</text>
</comment>
<comment type="function">
    <text evidence="1">Component of the F(0) channel, it forms part of the peripheral stalk, linking F(1) to F(0).</text>
</comment>
<comment type="subunit">
    <text evidence="1">F-type ATPases have 2 components, F(1) - the catalytic core - and F(0) - the membrane proton channel. F(1) has five subunits: alpha(3), beta(3), gamma(1), delta(1), epsilon(1). F(0) has three main subunits: a(1), b(2) and c(10-14). The alpha and beta chains form an alternating ring which encloses part of the gamma chain. F(1) is attached to F(0) by a central stalk formed by the gamma and epsilon chains, while a peripheral stalk is formed by the delta and b chains.</text>
</comment>
<comment type="subcellular location">
    <subcellularLocation>
        <location evidence="1">Cell inner membrane</location>
        <topology evidence="1">Single-pass membrane protein</topology>
    </subcellularLocation>
</comment>
<comment type="similarity">
    <text evidence="1">Belongs to the ATPase B chain family.</text>
</comment>